<gene>
    <name type="primary">MT-CYB</name>
    <name type="synonym">COB</name>
    <name type="synonym">CYTB</name>
    <name type="synonym">MTCYB</name>
</gene>
<reference key="1">
    <citation type="journal article" date="2002" name="Proc. Natl. Acad. Sci. U.S.A.">
        <title>Mammalian mitogenomic relationships and the root of the eutherian tree.</title>
        <authorList>
            <person name="Arnason U."/>
            <person name="Adegoke J.A."/>
            <person name="Bodin K."/>
            <person name="Born E.W."/>
            <person name="Esa Y.B."/>
            <person name="Gullberg A."/>
            <person name="Nilsson M."/>
            <person name="Short R.V."/>
            <person name="Xu X."/>
            <person name="Janke A."/>
        </authorList>
    </citation>
    <scope>NUCLEOTIDE SEQUENCE [GENOMIC DNA]</scope>
</reference>
<geneLocation type="mitochondrion"/>
<organism>
    <name type="scientific">Odobenus rosmarus rosmarus</name>
    <name type="common">Atlantic walrus</name>
    <dbReference type="NCBI Taxonomy" id="62698"/>
    <lineage>
        <taxon>Eukaryota</taxon>
        <taxon>Metazoa</taxon>
        <taxon>Chordata</taxon>
        <taxon>Craniata</taxon>
        <taxon>Vertebrata</taxon>
        <taxon>Euteleostomi</taxon>
        <taxon>Mammalia</taxon>
        <taxon>Eutheria</taxon>
        <taxon>Laurasiatheria</taxon>
        <taxon>Carnivora</taxon>
        <taxon>Caniformia</taxon>
        <taxon>Pinnipedia</taxon>
        <taxon>Odobenidae</taxon>
        <taxon>Odobenus</taxon>
    </lineage>
</organism>
<dbReference type="EMBL" id="AJ428576">
    <property type="protein sequence ID" value="CAD21718.1"/>
    <property type="molecule type" value="Genomic_DNA"/>
</dbReference>
<dbReference type="RefSeq" id="NP_659349.1">
    <property type="nucleotide sequence ID" value="NC_004029.2"/>
</dbReference>
<dbReference type="SMR" id="Q7HKW1"/>
<dbReference type="GeneID" id="805050"/>
<dbReference type="CTD" id="4519"/>
<dbReference type="GO" id="GO:0005743">
    <property type="term" value="C:mitochondrial inner membrane"/>
    <property type="evidence" value="ECO:0007669"/>
    <property type="project" value="UniProtKB-SubCell"/>
</dbReference>
<dbReference type="GO" id="GO:0045275">
    <property type="term" value="C:respiratory chain complex III"/>
    <property type="evidence" value="ECO:0007669"/>
    <property type="project" value="InterPro"/>
</dbReference>
<dbReference type="GO" id="GO:0046872">
    <property type="term" value="F:metal ion binding"/>
    <property type="evidence" value="ECO:0007669"/>
    <property type="project" value="UniProtKB-KW"/>
</dbReference>
<dbReference type="GO" id="GO:0008121">
    <property type="term" value="F:ubiquinol-cytochrome-c reductase activity"/>
    <property type="evidence" value="ECO:0007669"/>
    <property type="project" value="InterPro"/>
</dbReference>
<dbReference type="GO" id="GO:0006122">
    <property type="term" value="P:mitochondrial electron transport, ubiquinol to cytochrome c"/>
    <property type="evidence" value="ECO:0007669"/>
    <property type="project" value="TreeGrafter"/>
</dbReference>
<dbReference type="CDD" id="cd00290">
    <property type="entry name" value="cytochrome_b_C"/>
    <property type="match status" value="1"/>
</dbReference>
<dbReference type="CDD" id="cd00284">
    <property type="entry name" value="Cytochrome_b_N"/>
    <property type="match status" value="1"/>
</dbReference>
<dbReference type="FunFam" id="1.20.810.10:FF:000002">
    <property type="entry name" value="Cytochrome b"/>
    <property type="match status" value="1"/>
</dbReference>
<dbReference type="Gene3D" id="1.20.810.10">
    <property type="entry name" value="Cytochrome Bc1 Complex, Chain C"/>
    <property type="match status" value="1"/>
</dbReference>
<dbReference type="InterPro" id="IPR005798">
    <property type="entry name" value="Cyt_b/b6_C"/>
</dbReference>
<dbReference type="InterPro" id="IPR036150">
    <property type="entry name" value="Cyt_b/b6_C_sf"/>
</dbReference>
<dbReference type="InterPro" id="IPR005797">
    <property type="entry name" value="Cyt_b/b6_N"/>
</dbReference>
<dbReference type="InterPro" id="IPR027387">
    <property type="entry name" value="Cytb/b6-like_sf"/>
</dbReference>
<dbReference type="InterPro" id="IPR030689">
    <property type="entry name" value="Cytochrome_b"/>
</dbReference>
<dbReference type="InterPro" id="IPR048260">
    <property type="entry name" value="Cytochrome_b_C_euk/bac"/>
</dbReference>
<dbReference type="InterPro" id="IPR048259">
    <property type="entry name" value="Cytochrome_b_N_euk/bac"/>
</dbReference>
<dbReference type="InterPro" id="IPR016174">
    <property type="entry name" value="Di-haem_cyt_TM"/>
</dbReference>
<dbReference type="PANTHER" id="PTHR19271">
    <property type="entry name" value="CYTOCHROME B"/>
    <property type="match status" value="1"/>
</dbReference>
<dbReference type="PANTHER" id="PTHR19271:SF16">
    <property type="entry name" value="CYTOCHROME B"/>
    <property type="match status" value="1"/>
</dbReference>
<dbReference type="Pfam" id="PF00032">
    <property type="entry name" value="Cytochrom_B_C"/>
    <property type="match status" value="1"/>
</dbReference>
<dbReference type="Pfam" id="PF00033">
    <property type="entry name" value="Cytochrome_B"/>
    <property type="match status" value="1"/>
</dbReference>
<dbReference type="PIRSF" id="PIRSF038885">
    <property type="entry name" value="COB"/>
    <property type="match status" value="1"/>
</dbReference>
<dbReference type="SUPFAM" id="SSF81648">
    <property type="entry name" value="a domain/subunit of cytochrome bc1 complex (Ubiquinol-cytochrome c reductase)"/>
    <property type="match status" value="1"/>
</dbReference>
<dbReference type="SUPFAM" id="SSF81342">
    <property type="entry name" value="Transmembrane di-heme cytochromes"/>
    <property type="match status" value="1"/>
</dbReference>
<dbReference type="PROSITE" id="PS51003">
    <property type="entry name" value="CYTB_CTER"/>
    <property type="match status" value="1"/>
</dbReference>
<dbReference type="PROSITE" id="PS51002">
    <property type="entry name" value="CYTB_NTER"/>
    <property type="match status" value="1"/>
</dbReference>
<evidence type="ECO:0000250" key="1"/>
<evidence type="ECO:0000250" key="2">
    <source>
        <dbReference type="UniProtKB" id="P00157"/>
    </source>
</evidence>
<evidence type="ECO:0000255" key="3">
    <source>
        <dbReference type="PROSITE-ProRule" id="PRU00967"/>
    </source>
</evidence>
<evidence type="ECO:0000255" key="4">
    <source>
        <dbReference type="PROSITE-ProRule" id="PRU00968"/>
    </source>
</evidence>
<protein>
    <recommendedName>
        <fullName>Cytochrome b</fullName>
    </recommendedName>
    <alternativeName>
        <fullName>Complex III subunit 3</fullName>
    </alternativeName>
    <alternativeName>
        <fullName>Complex III subunit III</fullName>
    </alternativeName>
    <alternativeName>
        <fullName>Cytochrome b-c1 complex subunit 3</fullName>
    </alternativeName>
    <alternativeName>
        <fullName>Ubiquinol-cytochrome-c reductase complex cytochrome b subunit</fullName>
    </alternativeName>
</protein>
<sequence>MTNIRKTHPLAKIINNTFIDLPTPSNISAWWNFGSLLATCLILQILTGLFLAMHYTSDTTTAFSSITHICRDVNYGWIIRYMHANGASMFFICLYAHMGRGIYYGSYTLAETWNIGIVLLLTIMATAFMGYVLPWGQMSFWGATVITNLLSAIPYVGTDLVEWVWGGFSVDKATLTRFLALHFVLPFMALALTAVHLLFLHETGSNNPSGILSDSDKIPFHPYYTIKDILGLIILILILMLLVLFSPDLLGDPDNYTPANPLSTPPHIKPEWYFLFAYAILRSIPNKLGGVLALLLSILVLAIVPSLHTSKQRSMMFRPISQCLFWLLVADLITLTWIGGQPVEHPFIIIGQLASILYFMILLVFMPIAGMIENSILKW</sequence>
<name>CYB_ODORR</name>
<proteinExistence type="inferred from homology"/>
<accession>Q7HKW1</accession>
<feature type="chain" id="PRO_0000061313" description="Cytochrome b">
    <location>
        <begin position="1"/>
        <end position="379"/>
    </location>
</feature>
<feature type="transmembrane region" description="Helical" evidence="2">
    <location>
        <begin position="33"/>
        <end position="53"/>
    </location>
</feature>
<feature type="transmembrane region" description="Helical" evidence="2">
    <location>
        <begin position="77"/>
        <end position="98"/>
    </location>
</feature>
<feature type="transmembrane region" description="Helical" evidence="2">
    <location>
        <begin position="113"/>
        <end position="133"/>
    </location>
</feature>
<feature type="transmembrane region" description="Helical" evidence="2">
    <location>
        <begin position="178"/>
        <end position="198"/>
    </location>
</feature>
<feature type="transmembrane region" description="Helical" evidence="2">
    <location>
        <begin position="226"/>
        <end position="246"/>
    </location>
</feature>
<feature type="transmembrane region" description="Helical" evidence="2">
    <location>
        <begin position="288"/>
        <end position="308"/>
    </location>
</feature>
<feature type="transmembrane region" description="Helical" evidence="2">
    <location>
        <begin position="320"/>
        <end position="340"/>
    </location>
</feature>
<feature type="transmembrane region" description="Helical" evidence="2">
    <location>
        <begin position="347"/>
        <end position="367"/>
    </location>
</feature>
<feature type="binding site" description="axial binding residue" evidence="2">
    <location>
        <position position="83"/>
    </location>
    <ligand>
        <name>heme b</name>
        <dbReference type="ChEBI" id="CHEBI:60344"/>
        <label>b562</label>
    </ligand>
    <ligandPart>
        <name>Fe</name>
        <dbReference type="ChEBI" id="CHEBI:18248"/>
    </ligandPart>
</feature>
<feature type="binding site" description="axial binding residue" evidence="2">
    <location>
        <position position="97"/>
    </location>
    <ligand>
        <name>heme b</name>
        <dbReference type="ChEBI" id="CHEBI:60344"/>
        <label>b566</label>
    </ligand>
    <ligandPart>
        <name>Fe</name>
        <dbReference type="ChEBI" id="CHEBI:18248"/>
    </ligandPart>
</feature>
<feature type="binding site" description="axial binding residue" evidence="2">
    <location>
        <position position="182"/>
    </location>
    <ligand>
        <name>heme b</name>
        <dbReference type="ChEBI" id="CHEBI:60344"/>
        <label>b562</label>
    </ligand>
    <ligandPart>
        <name>Fe</name>
        <dbReference type="ChEBI" id="CHEBI:18248"/>
    </ligandPart>
</feature>
<feature type="binding site" description="axial binding residue" evidence="2">
    <location>
        <position position="196"/>
    </location>
    <ligand>
        <name>heme b</name>
        <dbReference type="ChEBI" id="CHEBI:60344"/>
        <label>b566</label>
    </ligand>
    <ligandPart>
        <name>Fe</name>
        <dbReference type="ChEBI" id="CHEBI:18248"/>
    </ligandPart>
</feature>
<feature type="binding site" evidence="2">
    <location>
        <position position="201"/>
    </location>
    <ligand>
        <name>a ubiquinone</name>
        <dbReference type="ChEBI" id="CHEBI:16389"/>
    </ligand>
</feature>
<comment type="function">
    <text evidence="2">Component of the ubiquinol-cytochrome c reductase complex (complex III or cytochrome b-c1 complex) that is part of the mitochondrial respiratory chain. The b-c1 complex mediates electron transfer from ubiquinol to cytochrome c. Contributes to the generation of a proton gradient across the mitochondrial membrane that is then used for ATP synthesis.</text>
</comment>
<comment type="cofactor">
    <cofactor evidence="2">
        <name>heme b</name>
        <dbReference type="ChEBI" id="CHEBI:60344"/>
    </cofactor>
    <text evidence="2">Binds 2 heme b groups non-covalently.</text>
</comment>
<comment type="subunit">
    <text evidence="2">The cytochrome bc1 complex contains 11 subunits: 3 respiratory subunits (MT-CYB, CYC1 and UQCRFS1), 2 core proteins (UQCRC1 and UQCRC2) and 6 low-molecular weight proteins (UQCRH/QCR6, UQCRB/QCR7, UQCRQ/QCR8, UQCR10/QCR9, UQCR11/QCR10 and a cleavage product of UQCRFS1). This cytochrome bc1 complex then forms a dimer.</text>
</comment>
<comment type="subcellular location">
    <subcellularLocation>
        <location evidence="2">Mitochondrion inner membrane</location>
        <topology evidence="2">Multi-pass membrane protein</topology>
    </subcellularLocation>
</comment>
<comment type="miscellaneous">
    <text evidence="1">Heme 1 (or BL or b562) is low-potential and absorbs at about 562 nm, and heme 2 (or BH or b566) is high-potential and absorbs at about 566 nm.</text>
</comment>
<comment type="similarity">
    <text evidence="3 4">Belongs to the cytochrome b family.</text>
</comment>
<comment type="caution">
    <text evidence="2">The full-length protein contains only eight transmembrane helices, not nine as predicted by bioinformatics tools.</text>
</comment>
<keyword id="KW-0249">Electron transport</keyword>
<keyword id="KW-0349">Heme</keyword>
<keyword id="KW-0408">Iron</keyword>
<keyword id="KW-0472">Membrane</keyword>
<keyword id="KW-0479">Metal-binding</keyword>
<keyword id="KW-0496">Mitochondrion</keyword>
<keyword id="KW-0999">Mitochondrion inner membrane</keyword>
<keyword id="KW-0679">Respiratory chain</keyword>
<keyword id="KW-0812">Transmembrane</keyword>
<keyword id="KW-1133">Transmembrane helix</keyword>
<keyword id="KW-0813">Transport</keyword>
<keyword id="KW-0830">Ubiquinone</keyword>